<keyword id="KW-0007">Acetylation</keyword>
<keyword id="KW-0966">Cell projection</keyword>
<keyword id="KW-0963">Cytoplasm</keyword>
<keyword id="KW-0206">Cytoskeleton</keyword>
<keyword id="KW-0243">Dynein</keyword>
<keyword id="KW-0433">Leucine-rich repeat</keyword>
<keyword id="KW-0493">Microtubule</keyword>
<keyword id="KW-0505">Motor protein</keyword>
<keyword id="KW-0597">Phosphoprotein</keyword>
<keyword id="KW-1185">Reference proteome</keyword>
<keyword id="KW-0677">Repeat</keyword>
<proteinExistence type="evidence at protein level"/>
<organism>
    <name type="scientific">Rattus norvegicus</name>
    <name type="common">Rat</name>
    <dbReference type="NCBI Taxonomy" id="10116"/>
    <lineage>
        <taxon>Eukaryota</taxon>
        <taxon>Metazoa</taxon>
        <taxon>Chordata</taxon>
        <taxon>Craniata</taxon>
        <taxon>Vertebrata</taxon>
        <taxon>Euteleostomi</taxon>
        <taxon>Mammalia</taxon>
        <taxon>Eutheria</taxon>
        <taxon>Euarchontoglires</taxon>
        <taxon>Glires</taxon>
        <taxon>Rodentia</taxon>
        <taxon>Myomorpha</taxon>
        <taxon>Muroidea</taxon>
        <taxon>Muridae</taxon>
        <taxon>Murinae</taxon>
        <taxon>Rattus</taxon>
    </lineage>
</organism>
<feature type="initiator methionine" description="Removed" evidence="1">
    <location>
        <position position="1"/>
    </location>
</feature>
<feature type="chain" id="PRO_0000441778" description="Dynein axonemal light chain 1">
    <location>
        <begin position="2"/>
        <end position="190"/>
    </location>
</feature>
<feature type="repeat" description="LRR 1" evidence="3">
    <location>
        <begin position="47"/>
        <end position="69"/>
    </location>
</feature>
<feature type="repeat" description="LRR 2" evidence="3">
    <location>
        <begin position="70"/>
        <end position="93"/>
    </location>
</feature>
<feature type="repeat" description="LRR 3" evidence="3">
    <location>
        <begin position="95"/>
        <end position="114"/>
    </location>
</feature>
<feature type="repeat" description="LRR 4" evidence="3">
    <location>
        <begin position="115"/>
        <end position="138"/>
    </location>
</feature>
<feature type="modified residue" description="N-acetylalanine" evidence="1">
    <location>
        <position position="2"/>
    </location>
</feature>
<feature type="modified residue" description="Phosphoserine" evidence="7">
    <location>
        <position position="56"/>
    </location>
</feature>
<sequence>MAKATTIKEALSRWEEKTGQKPSDAREIKLYAQIPPIEKMDASLSTLANCEKLSLSTNCIEKIANLNGLKNLRILSLGRNNIKNLNGLEAVGDTLEELWISYNFIEKLKGIHVMRKLKILYISNNLVKDWAEFVKLAELPCLEDLVFVGNPLEEKHSAEGNWIEEATKRVPKLKKLDGTPVIKEDEEEES</sequence>
<accession>A0A096MJZ0</accession>
<reference key="1">
    <citation type="journal article" date="2004" name="Nature">
        <title>Genome sequence of the Brown Norway rat yields insights into mammalian evolution.</title>
        <authorList>
            <person name="Gibbs R.A."/>
            <person name="Weinstock G.M."/>
            <person name="Metzker M.L."/>
            <person name="Muzny D.M."/>
            <person name="Sodergren E.J."/>
            <person name="Scherer S."/>
            <person name="Scott G."/>
            <person name="Steffen D."/>
            <person name="Worley K.C."/>
            <person name="Burch P.E."/>
            <person name="Okwuonu G."/>
            <person name="Hines S."/>
            <person name="Lewis L."/>
            <person name="Deramo C."/>
            <person name="Delgado O."/>
            <person name="Dugan-Rocha S."/>
            <person name="Miner G."/>
            <person name="Morgan M."/>
            <person name="Hawes A."/>
            <person name="Gill R."/>
            <person name="Holt R.A."/>
            <person name="Adams M.D."/>
            <person name="Amanatides P.G."/>
            <person name="Baden-Tillson H."/>
            <person name="Barnstead M."/>
            <person name="Chin S."/>
            <person name="Evans C.A."/>
            <person name="Ferriera S."/>
            <person name="Fosler C."/>
            <person name="Glodek A."/>
            <person name="Gu Z."/>
            <person name="Jennings D."/>
            <person name="Kraft C.L."/>
            <person name="Nguyen T."/>
            <person name="Pfannkoch C.M."/>
            <person name="Sitter C."/>
            <person name="Sutton G.G."/>
            <person name="Venter J.C."/>
            <person name="Woodage T."/>
            <person name="Smith D."/>
            <person name="Lee H.-M."/>
            <person name="Gustafson E."/>
            <person name="Cahill P."/>
            <person name="Kana A."/>
            <person name="Doucette-Stamm L."/>
            <person name="Weinstock K."/>
            <person name="Fechtel K."/>
            <person name="Weiss R.B."/>
            <person name="Dunn D.M."/>
            <person name="Green E.D."/>
            <person name="Blakesley R.W."/>
            <person name="Bouffard G.G."/>
            <person name="De Jong P.J."/>
            <person name="Osoegawa K."/>
            <person name="Zhu B."/>
            <person name="Marra M."/>
            <person name="Schein J."/>
            <person name="Bosdet I."/>
            <person name="Fjell C."/>
            <person name="Jones S."/>
            <person name="Krzywinski M."/>
            <person name="Mathewson C."/>
            <person name="Siddiqui A."/>
            <person name="Wye N."/>
            <person name="McPherson J."/>
            <person name="Zhao S."/>
            <person name="Fraser C.M."/>
            <person name="Shetty J."/>
            <person name="Shatsman S."/>
            <person name="Geer K."/>
            <person name="Chen Y."/>
            <person name="Abramzon S."/>
            <person name="Nierman W.C."/>
            <person name="Havlak P.H."/>
            <person name="Chen R."/>
            <person name="Durbin K.J."/>
            <person name="Egan A."/>
            <person name="Ren Y."/>
            <person name="Song X.-Z."/>
            <person name="Li B."/>
            <person name="Liu Y."/>
            <person name="Qin X."/>
            <person name="Cawley S."/>
            <person name="Cooney A.J."/>
            <person name="D'Souza L.M."/>
            <person name="Martin K."/>
            <person name="Wu J.Q."/>
            <person name="Gonzalez-Garay M.L."/>
            <person name="Jackson A.R."/>
            <person name="Kalafus K.J."/>
            <person name="McLeod M.P."/>
            <person name="Milosavljevic A."/>
            <person name="Virk D."/>
            <person name="Volkov A."/>
            <person name="Wheeler D.A."/>
            <person name="Zhang Z."/>
            <person name="Bailey J.A."/>
            <person name="Eichler E.E."/>
            <person name="Tuzun E."/>
            <person name="Birney E."/>
            <person name="Mongin E."/>
            <person name="Ureta-Vidal A."/>
            <person name="Woodwark C."/>
            <person name="Zdobnov E."/>
            <person name="Bork P."/>
            <person name="Suyama M."/>
            <person name="Torrents D."/>
            <person name="Alexandersson M."/>
            <person name="Trask B.J."/>
            <person name="Young J.M."/>
            <person name="Huang H."/>
            <person name="Wang H."/>
            <person name="Xing H."/>
            <person name="Daniels S."/>
            <person name="Gietzen D."/>
            <person name="Schmidt J."/>
            <person name="Stevens K."/>
            <person name="Vitt U."/>
            <person name="Wingrove J."/>
            <person name="Camara F."/>
            <person name="Mar Alba M."/>
            <person name="Abril J.F."/>
            <person name="Guigo R."/>
            <person name="Smit A."/>
            <person name="Dubchak I."/>
            <person name="Rubin E.M."/>
            <person name="Couronne O."/>
            <person name="Poliakov A."/>
            <person name="Huebner N."/>
            <person name="Ganten D."/>
            <person name="Goesele C."/>
            <person name="Hummel O."/>
            <person name="Kreitler T."/>
            <person name="Lee Y.-A."/>
            <person name="Monti J."/>
            <person name="Schulz H."/>
            <person name="Zimdahl H."/>
            <person name="Himmelbauer H."/>
            <person name="Lehrach H."/>
            <person name="Jacob H.J."/>
            <person name="Bromberg S."/>
            <person name="Gullings-Handley J."/>
            <person name="Jensen-Seaman M.I."/>
            <person name="Kwitek A.E."/>
            <person name="Lazar J."/>
            <person name="Pasko D."/>
            <person name="Tonellato P.J."/>
            <person name="Twigger S."/>
            <person name="Ponting C.P."/>
            <person name="Duarte J.M."/>
            <person name="Rice S."/>
            <person name="Goodstadt L."/>
            <person name="Beatson S.A."/>
            <person name="Emes R.D."/>
            <person name="Winter E.E."/>
            <person name="Webber C."/>
            <person name="Brandt P."/>
            <person name="Nyakatura G."/>
            <person name="Adetobi M."/>
            <person name="Chiaromonte F."/>
            <person name="Elnitski L."/>
            <person name="Eswara P."/>
            <person name="Hardison R.C."/>
            <person name="Hou M."/>
            <person name="Kolbe D."/>
            <person name="Makova K."/>
            <person name="Miller W."/>
            <person name="Nekrutenko A."/>
            <person name="Riemer C."/>
            <person name="Schwartz S."/>
            <person name="Taylor J."/>
            <person name="Yang S."/>
            <person name="Zhang Y."/>
            <person name="Lindpaintner K."/>
            <person name="Andrews T.D."/>
            <person name="Caccamo M."/>
            <person name="Clamp M."/>
            <person name="Clarke L."/>
            <person name="Curwen V."/>
            <person name="Durbin R.M."/>
            <person name="Eyras E."/>
            <person name="Searle S.M."/>
            <person name="Cooper G.M."/>
            <person name="Batzoglou S."/>
            <person name="Brudno M."/>
            <person name="Sidow A."/>
            <person name="Stone E.A."/>
            <person name="Payseur B.A."/>
            <person name="Bourque G."/>
            <person name="Lopez-Otin C."/>
            <person name="Puente X.S."/>
            <person name="Chakrabarti K."/>
            <person name="Chatterji S."/>
            <person name="Dewey C."/>
            <person name="Pachter L."/>
            <person name="Bray N."/>
            <person name="Yap V.B."/>
            <person name="Caspi A."/>
            <person name="Tesler G."/>
            <person name="Pevzner P.A."/>
            <person name="Haussler D."/>
            <person name="Roskin K.M."/>
            <person name="Baertsch R."/>
            <person name="Clawson H."/>
            <person name="Furey T.S."/>
            <person name="Hinrichs A.S."/>
            <person name="Karolchik D."/>
            <person name="Kent W.J."/>
            <person name="Rosenbloom K.R."/>
            <person name="Trumbower H."/>
            <person name="Weirauch M."/>
            <person name="Cooper D.N."/>
            <person name="Stenson P.D."/>
            <person name="Ma B."/>
            <person name="Brent M."/>
            <person name="Arumugam M."/>
            <person name="Shteynberg D."/>
            <person name="Copley R.R."/>
            <person name="Taylor M.S."/>
            <person name="Riethman H."/>
            <person name="Mudunuri U."/>
            <person name="Peterson J."/>
            <person name="Guyer M."/>
            <person name="Felsenfeld A."/>
            <person name="Old S."/>
            <person name="Mockrin S."/>
            <person name="Collins F.S."/>
        </authorList>
    </citation>
    <scope>NUCLEOTIDE SEQUENCE [LARGE SCALE GENOMIC DNA]</scope>
    <source>
        <strain>Brown Norway</strain>
    </source>
</reference>
<reference key="2">
    <citation type="journal article" date="2011" name="Am. J. Hum. Genet.">
        <title>Primary ciliary dyskinesia caused by homozygous mutation in DNAL1, encoding dynein light chain 1.</title>
        <authorList>
            <person name="Mazor M."/>
            <person name="Alkrinawi S."/>
            <person name="Chalifa-Caspi V."/>
            <person name="Manor E."/>
            <person name="Sheffield V.C."/>
            <person name="Aviram M."/>
            <person name="Parvari R."/>
        </authorList>
    </citation>
    <scope>INTERACTION WITH TUBULIN</scope>
    <scope>SUBUNIT</scope>
    <scope>INTERACTION WITH DNAH5</scope>
</reference>
<reference key="3">
    <citation type="journal article" date="2012" name="Nat. Commun.">
        <title>Quantitative maps of protein phosphorylation sites across 14 different rat organs and tissues.</title>
        <authorList>
            <person name="Lundby A."/>
            <person name="Secher A."/>
            <person name="Lage K."/>
            <person name="Nordsborg N.B."/>
            <person name="Dmytriyev A."/>
            <person name="Lundby C."/>
            <person name="Olsen J.V."/>
        </authorList>
    </citation>
    <scope>PHOSPHORYLATION [LARGE SCALE ANALYSIS] AT SER-56</scope>
    <scope>IDENTIFICATION BY MASS SPECTROMETRY [LARGE SCALE ANALYSIS]</scope>
</reference>
<comment type="function">
    <text evidence="1 2">Part of the multisubunit axonemal ATPase complexes that generate the force for cilia motility and govern beat frequency (By similarity). Component of the outer arm dynein (ODA). May be involved in a mechanosensory feedback mechanism controlling ODA activity based on external conformational cues by tethering the outer arm dynein heavy chain (DNAH5) to the microtubule within the axoneme (By similarity). Important for ciliary function in the airways and for the function of the cilia that produce the nodal flow essential for the determination of the left-right asymmetry (By similarity).</text>
</comment>
<comment type="subunit">
    <text evidence="1 4">Interacts with ZMYND10 (via C-terminus) (By similarity). Interacts with DNAH5, a outer arm dynein heavy chain (PubMed:21496787). Interacts with tubulin located within the A-tubule of the outer doublets in a ATP-independent manner (PubMed:21496787).</text>
</comment>
<comment type="subcellular location">
    <subcellularLocation>
        <location evidence="1">Cytoplasm</location>
        <location evidence="1">Cytoskeleton</location>
        <location evidence="1">Cilium axoneme</location>
    </subcellularLocation>
</comment>
<comment type="miscellaneous">
    <text evidence="2">Outer (ODAs) and inner (IDAs) dynein arms contain the molecular motors that generate the force to move cilia by ATP-dependent reactions. There are two mechanosensory systems that monitor and respond to the mechanical state (curvature) of the axoneme. One system involves the central pair microtubule complex and radial spokes and the second system involves the outer dynein arms.</text>
</comment>
<comment type="similarity">
    <text evidence="5">Belongs to the dynein light chain LC1-type family.</text>
</comment>
<dbReference type="EMBL" id="AC094055">
    <property type="status" value="NOT_ANNOTATED_CDS"/>
    <property type="molecule type" value="Genomic_DNA"/>
</dbReference>
<dbReference type="RefSeq" id="NP_001102947.2">
    <property type="nucleotide sequence ID" value="NM_001109477.2"/>
</dbReference>
<dbReference type="SMR" id="A0A096MJZ0"/>
<dbReference type="FunCoup" id="A0A096MJZ0">
    <property type="interactions" value="1637"/>
</dbReference>
<dbReference type="STRING" id="10116.ENSRNOP00000068314"/>
<dbReference type="iPTMnet" id="A0A096MJZ0"/>
<dbReference type="PhosphoSitePlus" id="A0A096MJZ0"/>
<dbReference type="PaxDb" id="10116-ENSRNOP00000068314"/>
<dbReference type="Ensembl" id="ENSRNOT00000076882.3">
    <property type="protein sequence ID" value="ENSRNOP00000068314.1"/>
    <property type="gene ID" value="ENSRNOG00000042333.4"/>
</dbReference>
<dbReference type="GeneID" id="685664"/>
<dbReference type="KEGG" id="rno:685664"/>
<dbReference type="AGR" id="RGD:1591349"/>
<dbReference type="CTD" id="83544"/>
<dbReference type="RGD" id="1591349">
    <property type="gene designation" value="Dnal1"/>
</dbReference>
<dbReference type="eggNOG" id="KOG0531">
    <property type="taxonomic scope" value="Eukaryota"/>
</dbReference>
<dbReference type="GeneTree" id="ENSGT00390000016904"/>
<dbReference type="HOGENOM" id="CLU_092189_0_0_1"/>
<dbReference type="InParanoid" id="A0A096MJZ0"/>
<dbReference type="PRO" id="PR:A0A096MJZ0"/>
<dbReference type="Proteomes" id="UP000002494">
    <property type="component" value="Chromosome 6"/>
</dbReference>
<dbReference type="Bgee" id="ENSRNOG00000042333">
    <property type="expression patterns" value="Expressed in frontal cortex and 19 other cell types or tissues"/>
</dbReference>
<dbReference type="ExpressionAtlas" id="A0A096MJZ0">
    <property type="expression patterns" value="baseline and differential"/>
</dbReference>
<dbReference type="GO" id="GO:0042995">
    <property type="term" value="C:cell projection"/>
    <property type="evidence" value="ECO:0007669"/>
    <property type="project" value="UniProtKB-KW"/>
</dbReference>
<dbReference type="GO" id="GO:0005737">
    <property type="term" value="C:cytoplasm"/>
    <property type="evidence" value="ECO:0000318"/>
    <property type="project" value="GO_Central"/>
</dbReference>
<dbReference type="GO" id="GO:0030286">
    <property type="term" value="C:dynein complex"/>
    <property type="evidence" value="ECO:0007669"/>
    <property type="project" value="UniProtKB-KW"/>
</dbReference>
<dbReference type="GO" id="GO:0005874">
    <property type="term" value="C:microtubule"/>
    <property type="evidence" value="ECO:0007669"/>
    <property type="project" value="UniProtKB-KW"/>
</dbReference>
<dbReference type="GO" id="GO:0043014">
    <property type="term" value="F:alpha-tubulin binding"/>
    <property type="evidence" value="ECO:0000266"/>
    <property type="project" value="RGD"/>
</dbReference>
<dbReference type="GO" id="GO:0045504">
    <property type="term" value="F:dynein heavy chain binding"/>
    <property type="evidence" value="ECO:0000266"/>
    <property type="project" value="RGD"/>
</dbReference>
<dbReference type="GO" id="GO:0036158">
    <property type="term" value="P:outer dynein arm assembly"/>
    <property type="evidence" value="ECO:0000266"/>
    <property type="project" value="RGD"/>
</dbReference>
<dbReference type="FunFam" id="3.80.10.10:FF:000049">
    <property type="entry name" value="Dynein light chain 1"/>
    <property type="match status" value="1"/>
</dbReference>
<dbReference type="Gene3D" id="3.80.10.10">
    <property type="entry name" value="Ribonuclease Inhibitor"/>
    <property type="match status" value="1"/>
</dbReference>
<dbReference type="InterPro" id="IPR001611">
    <property type="entry name" value="Leu-rich_rpt"/>
</dbReference>
<dbReference type="InterPro" id="IPR025875">
    <property type="entry name" value="Leu-rich_rpt_4"/>
</dbReference>
<dbReference type="InterPro" id="IPR032675">
    <property type="entry name" value="LRR_dom_sf"/>
</dbReference>
<dbReference type="PANTHER" id="PTHR15454:SF33">
    <property type="entry name" value="DYNEIN AXONEMAL LIGHT CHAIN 1"/>
    <property type="match status" value="1"/>
</dbReference>
<dbReference type="PANTHER" id="PTHR15454">
    <property type="entry name" value="NISCHARIN RELATED"/>
    <property type="match status" value="1"/>
</dbReference>
<dbReference type="Pfam" id="PF12799">
    <property type="entry name" value="LRR_4"/>
    <property type="match status" value="1"/>
</dbReference>
<dbReference type="SMART" id="SM00365">
    <property type="entry name" value="LRR_SD22"/>
    <property type="match status" value="4"/>
</dbReference>
<dbReference type="SUPFAM" id="SSF52058">
    <property type="entry name" value="L domain-like"/>
    <property type="match status" value="1"/>
</dbReference>
<dbReference type="PROSITE" id="PS51450">
    <property type="entry name" value="LRR"/>
    <property type="match status" value="4"/>
</dbReference>
<name>DNAL1_RAT</name>
<protein>
    <recommendedName>
        <fullName evidence="1">Dynein axonemal light chain 1</fullName>
        <shortName evidence="2">LC1</shortName>
    </recommendedName>
</protein>
<gene>
    <name evidence="6" type="primary">Dnal1</name>
</gene>
<evidence type="ECO:0000250" key="1">
    <source>
        <dbReference type="UniProtKB" id="Q4LDG9"/>
    </source>
</evidence>
<evidence type="ECO:0000250" key="2">
    <source>
        <dbReference type="UniProtKB" id="Q9XHH2"/>
    </source>
</evidence>
<evidence type="ECO:0000255" key="3"/>
<evidence type="ECO:0000269" key="4">
    <source>
    </source>
</evidence>
<evidence type="ECO:0000305" key="5"/>
<evidence type="ECO:0000312" key="6">
    <source>
        <dbReference type="RGD" id="1591349"/>
    </source>
</evidence>
<evidence type="ECO:0007744" key="7">
    <source>
    </source>
</evidence>